<gene>
    <name evidence="1" type="primary">adk</name>
    <name type="ordered locus">Fjoh_0420</name>
</gene>
<keyword id="KW-0067">ATP-binding</keyword>
<keyword id="KW-0963">Cytoplasm</keyword>
<keyword id="KW-0418">Kinase</keyword>
<keyword id="KW-0545">Nucleotide biosynthesis</keyword>
<keyword id="KW-0547">Nucleotide-binding</keyword>
<keyword id="KW-0808">Transferase</keyword>
<protein>
    <recommendedName>
        <fullName evidence="1">Adenylate kinase</fullName>
        <shortName evidence="1">AK</shortName>
        <ecNumber evidence="1">2.7.4.3</ecNumber>
    </recommendedName>
    <alternativeName>
        <fullName evidence="1">ATP-AMP transphosphorylase</fullName>
    </alternativeName>
    <alternativeName>
        <fullName evidence="1">ATP:AMP phosphotransferase</fullName>
    </alternativeName>
    <alternativeName>
        <fullName evidence="1">Adenylate monophosphate kinase</fullName>
    </alternativeName>
</protein>
<evidence type="ECO:0000255" key="1">
    <source>
        <dbReference type="HAMAP-Rule" id="MF_00235"/>
    </source>
</evidence>
<proteinExistence type="inferred from homology"/>
<reference key="1">
    <citation type="journal article" date="2009" name="Appl. Environ. Microbiol.">
        <title>Novel features of the polysaccharide-digesting gliding bacterium Flavobacterium johnsoniae as revealed by genome sequence analysis.</title>
        <authorList>
            <person name="McBride M.J."/>
            <person name="Xie G."/>
            <person name="Martens E.C."/>
            <person name="Lapidus A."/>
            <person name="Henrissat B."/>
            <person name="Rhodes R.G."/>
            <person name="Goltsman E."/>
            <person name="Wang W."/>
            <person name="Xu J."/>
            <person name="Hunnicutt D.W."/>
            <person name="Staroscik A.M."/>
            <person name="Hoover T.R."/>
            <person name="Cheng Y.Q."/>
            <person name="Stein J.L."/>
        </authorList>
    </citation>
    <scope>NUCLEOTIDE SEQUENCE [LARGE SCALE GENOMIC DNA]</scope>
    <source>
        <strain>ATCC 17061 / DSM 2064 / JCM 8514 / BCRC 14874 / CCUG 350202 / NBRC 14942 / NCIMB 11054 / UW101</strain>
    </source>
</reference>
<dbReference type="EC" id="2.7.4.3" evidence="1"/>
<dbReference type="EMBL" id="CP000685">
    <property type="protein sequence ID" value="ABQ03456.1"/>
    <property type="molecule type" value="Genomic_DNA"/>
</dbReference>
<dbReference type="RefSeq" id="WP_012022512.1">
    <property type="nucleotide sequence ID" value="NZ_MUGZ01000005.1"/>
</dbReference>
<dbReference type="SMR" id="A5FMV7"/>
<dbReference type="STRING" id="376686.Fjoh_0420"/>
<dbReference type="KEGG" id="fjo:Fjoh_0420"/>
<dbReference type="eggNOG" id="COG0563">
    <property type="taxonomic scope" value="Bacteria"/>
</dbReference>
<dbReference type="HOGENOM" id="CLU_032354_4_1_10"/>
<dbReference type="OrthoDB" id="9805030at2"/>
<dbReference type="UniPathway" id="UPA00588">
    <property type="reaction ID" value="UER00649"/>
</dbReference>
<dbReference type="Proteomes" id="UP000006694">
    <property type="component" value="Chromosome"/>
</dbReference>
<dbReference type="GO" id="GO:0005737">
    <property type="term" value="C:cytoplasm"/>
    <property type="evidence" value="ECO:0007669"/>
    <property type="project" value="UniProtKB-SubCell"/>
</dbReference>
<dbReference type="GO" id="GO:0004017">
    <property type="term" value="F:adenylate kinase activity"/>
    <property type="evidence" value="ECO:0007669"/>
    <property type="project" value="UniProtKB-UniRule"/>
</dbReference>
<dbReference type="GO" id="GO:0005524">
    <property type="term" value="F:ATP binding"/>
    <property type="evidence" value="ECO:0007669"/>
    <property type="project" value="UniProtKB-UniRule"/>
</dbReference>
<dbReference type="GO" id="GO:0044209">
    <property type="term" value="P:AMP salvage"/>
    <property type="evidence" value="ECO:0007669"/>
    <property type="project" value="UniProtKB-UniRule"/>
</dbReference>
<dbReference type="CDD" id="cd01428">
    <property type="entry name" value="ADK"/>
    <property type="match status" value="1"/>
</dbReference>
<dbReference type="Gene3D" id="3.40.50.300">
    <property type="entry name" value="P-loop containing nucleotide triphosphate hydrolases"/>
    <property type="match status" value="1"/>
</dbReference>
<dbReference type="HAMAP" id="MF_00235">
    <property type="entry name" value="Adenylate_kinase_Adk"/>
    <property type="match status" value="1"/>
</dbReference>
<dbReference type="InterPro" id="IPR000850">
    <property type="entry name" value="Adenylat/UMP-CMP_kin"/>
</dbReference>
<dbReference type="InterPro" id="IPR033690">
    <property type="entry name" value="Adenylat_kinase_CS"/>
</dbReference>
<dbReference type="InterPro" id="IPR027417">
    <property type="entry name" value="P-loop_NTPase"/>
</dbReference>
<dbReference type="NCBIfam" id="NF001381">
    <property type="entry name" value="PRK00279.1-3"/>
    <property type="match status" value="1"/>
</dbReference>
<dbReference type="NCBIfam" id="NF011100">
    <property type="entry name" value="PRK14527.1"/>
    <property type="match status" value="1"/>
</dbReference>
<dbReference type="NCBIfam" id="NF011104">
    <property type="entry name" value="PRK14531.1"/>
    <property type="match status" value="1"/>
</dbReference>
<dbReference type="NCBIfam" id="NF011105">
    <property type="entry name" value="PRK14532.1"/>
    <property type="match status" value="1"/>
</dbReference>
<dbReference type="PANTHER" id="PTHR23359">
    <property type="entry name" value="NUCLEOTIDE KINASE"/>
    <property type="match status" value="1"/>
</dbReference>
<dbReference type="Pfam" id="PF00406">
    <property type="entry name" value="ADK"/>
    <property type="match status" value="1"/>
</dbReference>
<dbReference type="PRINTS" id="PR00094">
    <property type="entry name" value="ADENYLTKNASE"/>
</dbReference>
<dbReference type="SUPFAM" id="SSF52540">
    <property type="entry name" value="P-loop containing nucleoside triphosphate hydrolases"/>
    <property type="match status" value="1"/>
</dbReference>
<dbReference type="PROSITE" id="PS00113">
    <property type="entry name" value="ADENYLATE_KINASE"/>
    <property type="match status" value="1"/>
</dbReference>
<accession>A5FMV7</accession>
<name>KAD_FLAJ1</name>
<feature type="chain" id="PRO_1000078274" description="Adenylate kinase">
    <location>
        <begin position="1"/>
        <end position="190"/>
    </location>
</feature>
<feature type="region of interest" description="NMP" evidence="1">
    <location>
        <begin position="31"/>
        <end position="60"/>
    </location>
</feature>
<feature type="region of interest" description="LID" evidence="1">
    <location>
        <begin position="127"/>
        <end position="137"/>
    </location>
</feature>
<feature type="binding site" evidence="1">
    <location>
        <begin position="11"/>
        <end position="16"/>
    </location>
    <ligand>
        <name>ATP</name>
        <dbReference type="ChEBI" id="CHEBI:30616"/>
    </ligand>
</feature>
<feature type="binding site" evidence="1">
    <location>
        <position position="32"/>
    </location>
    <ligand>
        <name>AMP</name>
        <dbReference type="ChEBI" id="CHEBI:456215"/>
    </ligand>
</feature>
<feature type="binding site" evidence="1">
    <location>
        <position position="37"/>
    </location>
    <ligand>
        <name>AMP</name>
        <dbReference type="ChEBI" id="CHEBI:456215"/>
    </ligand>
</feature>
<feature type="binding site" evidence="1">
    <location>
        <begin position="58"/>
        <end position="60"/>
    </location>
    <ligand>
        <name>AMP</name>
        <dbReference type="ChEBI" id="CHEBI:456215"/>
    </ligand>
</feature>
<feature type="binding site" evidence="1">
    <location>
        <begin position="86"/>
        <end position="89"/>
    </location>
    <ligand>
        <name>AMP</name>
        <dbReference type="ChEBI" id="CHEBI:456215"/>
    </ligand>
</feature>
<feature type="binding site" evidence="1">
    <location>
        <position position="93"/>
    </location>
    <ligand>
        <name>AMP</name>
        <dbReference type="ChEBI" id="CHEBI:456215"/>
    </ligand>
</feature>
<feature type="binding site" evidence="1">
    <location>
        <position position="128"/>
    </location>
    <ligand>
        <name>ATP</name>
        <dbReference type="ChEBI" id="CHEBI:30616"/>
    </ligand>
</feature>
<feature type="binding site" evidence="1">
    <location>
        <position position="134"/>
    </location>
    <ligand>
        <name>AMP</name>
        <dbReference type="ChEBI" id="CHEBI:456215"/>
    </ligand>
</feature>
<feature type="binding site" evidence="1">
    <location>
        <position position="146"/>
    </location>
    <ligand>
        <name>AMP</name>
        <dbReference type="ChEBI" id="CHEBI:456215"/>
    </ligand>
</feature>
<feature type="binding site" evidence="1">
    <location>
        <position position="174"/>
    </location>
    <ligand>
        <name>ATP</name>
        <dbReference type="ChEBI" id="CHEBI:30616"/>
    </ligand>
</feature>
<sequence>MINIVLFGKPGAGKGTQAEFLKEKYNLTHLSTGDIFRFNLKNDTELGKQARVFMDNGELVPCEVTTAMLIDEVKKHPDSAGFLFDGYPRTLDQAEALDKFLPTIGSSVTATIALEADDEILVKRLLERGKTSGRADDQDEEKIRVRYQEYNEKTAPLIGYYKDQNKFYAVDGIGTIEQITERLTSVIDNL</sequence>
<organism>
    <name type="scientific">Flavobacterium johnsoniae (strain ATCC 17061 / DSM 2064 / JCM 8514 / BCRC 14874 / CCUG 350202 / NBRC 14942 / NCIMB 11054 / UW101)</name>
    <name type="common">Cytophaga johnsonae</name>
    <dbReference type="NCBI Taxonomy" id="376686"/>
    <lineage>
        <taxon>Bacteria</taxon>
        <taxon>Pseudomonadati</taxon>
        <taxon>Bacteroidota</taxon>
        <taxon>Flavobacteriia</taxon>
        <taxon>Flavobacteriales</taxon>
        <taxon>Flavobacteriaceae</taxon>
        <taxon>Flavobacterium</taxon>
    </lineage>
</organism>
<comment type="function">
    <text evidence="1">Catalyzes the reversible transfer of the terminal phosphate group between ATP and AMP. Plays an important role in cellular energy homeostasis and in adenine nucleotide metabolism.</text>
</comment>
<comment type="catalytic activity">
    <reaction evidence="1">
        <text>AMP + ATP = 2 ADP</text>
        <dbReference type="Rhea" id="RHEA:12973"/>
        <dbReference type="ChEBI" id="CHEBI:30616"/>
        <dbReference type="ChEBI" id="CHEBI:456215"/>
        <dbReference type="ChEBI" id="CHEBI:456216"/>
        <dbReference type="EC" id="2.7.4.3"/>
    </reaction>
</comment>
<comment type="pathway">
    <text evidence="1">Purine metabolism; AMP biosynthesis via salvage pathway; AMP from ADP: step 1/1.</text>
</comment>
<comment type="subunit">
    <text evidence="1">Monomer.</text>
</comment>
<comment type="subcellular location">
    <subcellularLocation>
        <location evidence="1">Cytoplasm</location>
    </subcellularLocation>
</comment>
<comment type="domain">
    <text evidence="1">Consists of three domains, a large central CORE domain and two small peripheral domains, NMPbind and LID, which undergo movements during catalysis. The LID domain closes over the site of phosphoryl transfer upon ATP binding. Assembling and dissambling the active center during each catalytic cycle provides an effective means to prevent ATP hydrolysis.</text>
</comment>
<comment type="similarity">
    <text evidence="1">Belongs to the adenylate kinase family.</text>
</comment>